<evidence type="ECO:0000255" key="1">
    <source>
        <dbReference type="HAMAP-Rule" id="MF_01393"/>
    </source>
</evidence>
<protein>
    <recommendedName>
        <fullName evidence="1">ATP synthase subunit a</fullName>
    </recommendedName>
    <alternativeName>
        <fullName evidence="1">ATP synthase F0 sector subunit a</fullName>
    </alternativeName>
    <alternativeName>
        <fullName evidence="1">F-ATPase subunit 6</fullName>
    </alternativeName>
</protein>
<feature type="chain" id="PRO_1000145337" description="ATP synthase subunit a">
    <location>
        <begin position="1"/>
        <end position="238"/>
    </location>
</feature>
<feature type="transmembrane region" description="Helical" evidence="1">
    <location>
        <begin position="15"/>
        <end position="35"/>
    </location>
</feature>
<feature type="transmembrane region" description="Helical" evidence="1">
    <location>
        <begin position="76"/>
        <end position="96"/>
    </location>
</feature>
<feature type="transmembrane region" description="Helical" evidence="1">
    <location>
        <begin position="111"/>
        <end position="131"/>
    </location>
</feature>
<feature type="transmembrane region" description="Helical" evidence="1">
    <location>
        <begin position="167"/>
        <end position="187"/>
    </location>
</feature>
<feature type="transmembrane region" description="Helical" evidence="1">
    <location>
        <begin position="208"/>
        <end position="230"/>
    </location>
</feature>
<gene>
    <name evidence="1" type="primary">atpB</name>
    <name type="ordered locus">SPCG_1497</name>
</gene>
<accession>B2IQX5</accession>
<reference key="1">
    <citation type="journal article" date="2009" name="BMC Genomics">
        <title>Genome evolution driven by host adaptations results in a more virulent and antimicrobial-resistant Streptococcus pneumoniae serotype 14.</title>
        <authorList>
            <person name="Ding F."/>
            <person name="Tang P."/>
            <person name="Hsu M.-H."/>
            <person name="Cui P."/>
            <person name="Hu S."/>
            <person name="Yu J."/>
            <person name="Chiu C.-H."/>
        </authorList>
    </citation>
    <scope>NUCLEOTIDE SEQUENCE [LARGE SCALE GENOMIC DNA]</scope>
    <source>
        <strain>CGSP14</strain>
    </source>
</reference>
<sequence length="238" mass="27208">MEESINPIISIGPVIFNLTMLAMTLLIVGVIFVFIYWASRNMTLKPKGKQNVLEYVYDFVIGFTEPNIGSRYMKDYSLFFLCLFLFMVIANNLGLMTKLQTIDGTNWWSSPTANLQYDLTLSFLVILLTHIESVRRRGFKKSIKSFMSPVFVIPMNILEEFTNFLSLALRIFGNIFAGEVMTSLLLLLSHQAIYWYPVAFGANLAWTAFSVFISCIQAYVFTLLTSVYLGNKINIEEE</sequence>
<dbReference type="EMBL" id="CP001033">
    <property type="protein sequence ID" value="ACB90749.1"/>
    <property type="molecule type" value="Genomic_DNA"/>
</dbReference>
<dbReference type="RefSeq" id="WP_000392851.1">
    <property type="nucleotide sequence ID" value="NC_010582.1"/>
</dbReference>
<dbReference type="SMR" id="B2IQX5"/>
<dbReference type="GeneID" id="45653248"/>
<dbReference type="KEGG" id="spw:SPCG_1497"/>
<dbReference type="HOGENOM" id="CLU_041018_2_3_9"/>
<dbReference type="GO" id="GO:0005886">
    <property type="term" value="C:plasma membrane"/>
    <property type="evidence" value="ECO:0007669"/>
    <property type="project" value="UniProtKB-SubCell"/>
</dbReference>
<dbReference type="GO" id="GO:0045259">
    <property type="term" value="C:proton-transporting ATP synthase complex"/>
    <property type="evidence" value="ECO:0007669"/>
    <property type="project" value="UniProtKB-KW"/>
</dbReference>
<dbReference type="GO" id="GO:0046933">
    <property type="term" value="F:proton-transporting ATP synthase activity, rotational mechanism"/>
    <property type="evidence" value="ECO:0007669"/>
    <property type="project" value="UniProtKB-UniRule"/>
</dbReference>
<dbReference type="GO" id="GO:0042777">
    <property type="term" value="P:proton motive force-driven plasma membrane ATP synthesis"/>
    <property type="evidence" value="ECO:0007669"/>
    <property type="project" value="TreeGrafter"/>
</dbReference>
<dbReference type="CDD" id="cd00310">
    <property type="entry name" value="ATP-synt_Fo_a_6"/>
    <property type="match status" value="1"/>
</dbReference>
<dbReference type="Gene3D" id="1.20.120.220">
    <property type="entry name" value="ATP synthase, F0 complex, subunit A"/>
    <property type="match status" value="1"/>
</dbReference>
<dbReference type="HAMAP" id="MF_01393">
    <property type="entry name" value="ATP_synth_a_bact"/>
    <property type="match status" value="1"/>
</dbReference>
<dbReference type="InterPro" id="IPR045082">
    <property type="entry name" value="ATP_syn_F0_a_bact/chloroplast"/>
</dbReference>
<dbReference type="InterPro" id="IPR000568">
    <property type="entry name" value="ATP_synth_F0_asu"/>
</dbReference>
<dbReference type="InterPro" id="IPR035908">
    <property type="entry name" value="F0_ATP_A_sf"/>
</dbReference>
<dbReference type="NCBIfam" id="TIGR01131">
    <property type="entry name" value="ATP_synt_6_or_A"/>
    <property type="match status" value="1"/>
</dbReference>
<dbReference type="NCBIfam" id="NF004479">
    <property type="entry name" value="PRK05815.1-4"/>
    <property type="match status" value="1"/>
</dbReference>
<dbReference type="PANTHER" id="PTHR42823">
    <property type="entry name" value="ATP SYNTHASE SUBUNIT A, CHLOROPLASTIC"/>
    <property type="match status" value="1"/>
</dbReference>
<dbReference type="PANTHER" id="PTHR42823:SF3">
    <property type="entry name" value="ATP SYNTHASE SUBUNIT A, CHLOROPLASTIC"/>
    <property type="match status" value="1"/>
</dbReference>
<dbReference type="Pfam" id="PF00119">
    <property type="entry name" value="ATP-synt_A"/>
    <property type="match status" value="1"/>
</dbReference>
<dbReference type="PRINTS" id="PR00123">
    <property type="entry name" value="ATPASEA"/>
</dbReference>
<dbReference type="SUPFAM" id="SSF81336">
    <property type="entry name" value="F1F0 ATP synthase subunit A"/>
    <property type="match status" value="1"/>
</dbReference>
<comment type="function">
    <text evidence="1">Key component of the proton channel; it plays a direct role in the translocation of protons across the membrane.</text>
</comment>
<comment type="subunit">
    <text evidence="1">F-type ATPases have 2 components, CF(1) - the catalytic core - and CF(0) - the membrane proton channel. CF(1) has five subunits: alpha(3), beta(3), gamma(1), delta(1), epsilon(1). CF(0) has three main subunits: a(1), b(2) and c(9-12). The alpha and beta chains form an alternating ring which encloses part of the gamma chain. CF(1) is attached to CF(0) by a central stalk formed by the gamma and epsilon chains, while a peripheral stalk is formed by the delta and b chains.</text>
</comment>
<comment type="subcellular location">
    <subcellularLocation>
        <location evidence="1">Cell membrane</location>
        <topology evidence="1">Multi-pass membrane protein</topology>
    </subcellularLocation>
</comment>
<comment type="similarity">
    <text evidence="1">Belongs to the ATPase A chain family.</text>
</comment>
<organism>
    <name type="scientific">Streptococcus pneumoniae (strain CGSP14)</name>
    <dbReference type="NCBI Taxonomy" id="516950"/>
    <lineage>
        <taxon>Bacteria</taxon>
        <taxon>Bacillati</taxon>
        <taxon>Bacillota</taxon>
        <taxon>Bacilli</taxon>
        <taxon>Lactobacillales</taxon>
        <taxon>Streptococcaceae</taxon>
        <taxon>Streptococcus</taxon>
    </lineage>
</organism>
<keyword id="KW-0066">ATP synthesis</keyword>
<keyword id="KW-1003">Cell membrane</keyword>
<keyword id="KW-0138">CF(0)</keyword>
<keyword id="KW-0375">Hydrogen ion transport</keyword>
<keyword id="KW-0406">Ion transport</keyword>
<keyword id="KW-0472">Membrane</keyword>
<keyword id="KW-0812">Transmembrane</keyword>
<keyword id="KW-1133">Transmembrane helix</keyword>
<keyword id="KW-0813">Transport</keyword>
<proteinExistence type="inferred from homology"/>
<name>ATP6_STRPS</name>